<comment type="function">
    <text evidence="1">Potential cysteine protease, which may play a central role after invasion of host cell.</text>
</comment>
<comment type="similarity">
    <text evidence="3">Belongs to the peptidase C58 family.</text>
</comment>
<sequence>MYNRVDGEYAHTEQAEESSWPADGSECAQTLTEIARLESLAPGELFDRMGLCFSKPHTSDAIDDSSNTSGLSTSSLSSSSELSVATSPVRPLFDYRTAELPQANVSGICVGLAAEWLLDLPSSASSRMGVLLPGTENHRSAARRQEQSEKLKTQLKEDKAEGSHNFQAKSTILRDAGLEPSAEETRYRFGTSSCIDKIVNELAQDPSVHLVSLKFVQPGAGTHTIATATSNGTTILSDPNYGEFTVPSDRVGGLFKSLAERYSTLNKRDISAVVTQRIRYGHPNATDLALFPRAEPHR</sequence>
<organism>
    <name type="scientific">Bradyrhizobium diazoefficiens (strain JCM 10833 / BCRC 13528 / IAM 13628 / NBRC 14792 / USDA 110)</name>
    <dbReference type="NCBI Taxonomy" id="224911"/>
    <lineage>
        <taxon>Bacteria</taxon>
        <taxon>Pseudomonadati</taxon>
        <taxon>Pseudomonadota</taxon>
        <taxon>Alphaproteobacteria</taxon>
        <taxon>Hyphomicrobiales</taxon>
        <taxon>Nitrobacteraceae</taxon>
        <taxon>Bradyrhizobium</taxon>
    </lineage>
</organism>
<proteinExistence type="inferred from homology"/>
<protein>
    <recommendedName>
        <fullName>Putative cysteine protease YopT-like blr2058</fullName>
        <ecNumber>3.4.22.-</ecNumber>
    </recommendedName>
</protein>
<feature type="chain" id="PRO_0000192515" description="Putative cysteine protease YopT-like blr2058">
    <location>
        <begin position="1"/>
        <end position="298"/>
    </location>
</feature>
<feature type="region of interest" description="Disordered" evidence="2">
    <location>
        <begin position="1"/>
        <end position="25"/>
    </location>
</feature>
<feature type="region of interest" description="Disordered" evidence="2">
    <location>
        <begin position="59"/>
        <end position="80"/>
    </location>
</feature>
<feature type="region of interest" description="Disordered" evidence="2">
    <location>
        <begin position="137"/>
        <end position="166"/>
    </location>
</feature>
<feature type="compositionally biased region" description="Basic and acidic residues" evidence="2">
    <location>
        <begin position="1"/>
        <end position="14"/>
    </location>
</feature>
<feature type="compositionally biased region" description="Low complexity" evidence="2">
    <location>
        <begin position="65"/>
        <end position="80"/>
    </location>
</feature>
<feature type="compositionally biased region" description="Basic and acidic residues" evidence="2">
    <location>
        <begin position="137"/>
        <end position="162"/>
    </location>
</feature>
<feature type="active site" evidence="1">
    <location>
        <position position="109"/>
    </location>
</feature>
<feature type="active site" evidence="1">
    <location>
        <position position="223"/>
    </location>
</feature>
<feature type="active site" evidence="1">
    <location>
        <position position="238"/>
    </location>
</feature>
<gene>
    <name type="ordered locus">blr2058</name>
    <name type="ORF">id797</name>
</gene>
<dbReference type="EC" id="3.4.22.-"/>
<dbReference type="EMBL" id="AH010242">
    <property type="protein sequence ID" value="AAG61028.1"/>
    <property type="molecule type" value="Genomic_DNA"/>
</dbReference>
<dbReference type="EMBL" id="BA000040">
    <property type="protein sequence ID" value="BAC47323.1"/>
    <property type="molecule type" value="Genomic_DNA"/>
</dbReference>
<dbReference type="RefSeq" id="NP_768698.1">
    <property type="nucleotide sequence ID" value="NC_004463.1"/>
</dbReference>
<dbReference type="RefSeq" id="WP_011084854.1">
    <property type="nucleotide sequence ID" value="NZ_CP011360.1"/>
</dbReference>
<dbReference type="SMR" id="Q9AMW4"/>
<dbReference type="MEROPS" id="C58.004"/>
<dbReference type="EnsemblBacteria" id="BAC47323">
    <property type="protein sequence ID" value="BAC47323"/>
    <property type="gene ID" value="BAC47323"/>
</dbReference>
<dbReference type="KEGG" id="bja:blr2058"/>
<dbReference type="PATRIC" id="fig|224911.44.peg.1563"/>
<dbReference type="eggNOG" id="ENOG5032MMY">
    <property type="taxonomic scope" value="Bacteria"/>
</dbReference>
<dbReference type="HOGENOM" id="CLU_089565_0_0_5"/>
<dbReference type="InParanoid" id="Q9AMW4"/>
<dbReference type="OrthoDB" id="7300477at2"/>
<dbReference type="Proteomes" id="UP000002526">
    <property type="component" value="Chromosome"/>
</dbReference>
<dbReference type="GO" id="GO:0004197">
    <property type="term" value="F:cysteine-type endopeptidase activity"/>
    <property type="evidence" value="ECO:0007669"/>
    <property type="project" value="InterPro"/>
</dbReference>
<dbReference type="GO" id="GO:0006508">
    <property type="term" value="P:proteolysis"/>
    <property type="evidence" value="ECO:0007669"/>
    <property type="project" value="UniProtKB-KW"/>
</dbReference>
<dbReference type="CDD" id="cd20497">
    <property type="entry name" value="C58_YopT-like"/>
    <property type="match status" value="1"/>
</dbReference>
<dbReference type="Gene3D" id="3.90.70.20">
    <property type="match status" value="1"/>
</dbReference>
<dbReference type="InterPro" id="IPR038765">
    <property type="entry name" value="Papain-like_cys_pep_sf"/>
</dbReference>
<dbReference type="InterPro" id="IPR006473">
    <property type="entry name" value="Peptidase_C58_Yopt"/>
</dbReference>
<dbReference type="NCBIfam" id="TIGR01586">
    <property type="entry name" value="yopT_cys_prot"/>
    <property type="match status" value="1"/>
</dbReference>
<dbReference type="Pfam" id="PF03543">
    <property type="entry name" value="Peptidase_C58"/>
    <property type="match status" value="1"/>
</dbReference>
<dbReference type="SUPFAM" id="SSF54001">
    <property type="entry name" value="Cysteine proteinases"/>
    <property type="match status" value="1"/>
</dbReference>
<name>Y2058_BRADU</name>
<keyword id="KW-0378">Hydrolase</keyword>
<keyword id="KW-0645">Protease</keyword>
<keyword id="KW-1185">Reference proteome</keyword>
<keyword id="KW-0788">Thiol protease</keyword>
<reference key="1">
    <citation type="journal article" date="2001" name="J. Bacteriol.">
        <title>Potential symbiosis-specific genes uncovered by sequencing a 410-kb DNA region of the Bradyrhizobium japonicum chromosome.</title>
        <authorList>
            <person name="Goettfert M."/>
            <person name="Roethlisberger S."/>
            <person name="Kuendig C."/>
            <person name="Beck C."/>
            <person name="Marty R."/>
            <person name="Hennecke H."/>
        </authorList>
    </citation>
    <scope>NUCLEOTIDE SEQUENCE [GENOMIC DNA]</scope>
    <source>
        <strain>USDA 110spc4</strain>
    </source>
</reference>
<reference key="2">
    <citation type="journal article" date="2002" name="DNA Res.">
        <title>Complete genomic sequence of nitrogen-fixing symbiotic bacterium Bradyrhizobium japonicum USDA110.</title>
        <authorList>
            <person name="Kaneko T."/>
            <person name="Nakamura Y."/>
            <person name="Sato S."/>
            <person name="Minamisawa K."/>
            <person name="Uchiumi T."/>
            <person name="Sasamoto S."/>
            <person name="Watanabe A."/>
            <person name="Idesawa K."/>
            <person name="Iriguchi M."/>
            <person name="Kawashima K."/>
            <person name="Kohara M."/>
            <person name="Matsumoto M."/>
            <person name="Shimpo S."/>
            <person name="Tsuruoka H."/>
            <person name="Wada T."/>
            <person name="Yamada M."/>
            <person name="Tabata S."/>
        </authorList>
    </citation>
    <scope>NUCLEOTIDE SEQUENCE [LARGE SCALE GENOMIC DNA]</scope>
    <source>
        <strain>JCM 10833 / BCRC 13528 / IAM 13628 / NBRC 14792 / USDA 110</strain>
    </source>
</reference>
<accession>Q9AMW4</accession>
<evidence type="ECO:0000250" key="1"/>
<evidence type="ECO:0000256" key="2">
    <source>
        <dbReference type="SAM" id="MobiDB-lite"/>
    </source>
</evidence>
<evidence type="ECO:0000305" key="3"/>